<accession>P30286</accession>
<sequence length="213" mass="24085">MKFSEEKNVSNNPTNFEGGLDSRKVGENRRALGVINQNLVVEGRPYPCVVNKRALSERNDVCEKKQADPVHRPITRRFAAKIASTKTSNAEGTTKRSNLAKSSSNGFGDFIFVDDEHKPVEDQPVPMALEQTEPMHSESDQMEEVEMEDIMEEPVMDIDTPDANDPLAVAEYIEDLYSYYRKVESTSCVSPNYMAQQFDINERMRAILVDCLL</sequence>
<reference key="1">
    <citation type="journal article" date="1992" name="Plant Cell">
        <title>Alfalfa cyclins: differential expression during the cell cycle and in plant organs.</title>
        <authorList>
            <person name="Hirt H."/>
            <person name="Mink M."/>
            <person name="Pfosser M."/>
            <person name="Boegre L."/>
            <person name="Gyoergyey J."/>
            <person name="Jonak C."/>
            <person name="Gartner A."/>
            <person name="Dudits D."/>
            <person name="Heberle-Bors E."/>
        </authorList>
    </citation>
    <scope>NUCLEOTIDE SEQUENCE [MRNA]</scope>
</reference>
<feature type="chain" id="PRO_0000080392" description="G2/mitotic-specific cyclin-1">
    <location>
        <begin position="1"/>
        <end position="213" status="greater than"/>
    </location>
</feature>
<feature type="region of interest" description="Disordered" evidence="1">
    <location>
        <begin position="1"/>
        <end position="23"/>
    </location>
</feature>
<feature type="non-terminal residue">
    <location>
        <position position="213"/>
    </location>
</feature>
<organism>
    <name type="scientific">Medicago sativa</name>
    <name type="common">Alfalfa</name>
    <dbReference type="NCBI Taxonomy" id="3879"/>
    <lineage>
        <taxon>Eukaryota</taxon>
        <taxon>Viridiplantae</taxon>
        <taxon>Streptophyta</taxon>
        <taxon>Embryophyta</taxon>
        <taxon>Tracheophyta</taxon>
        <taxon>Spermatophyta</taxon>
        <taxon>Magnoliopsida</taxon>
        <taxon>eudicotyledons</taxon>
        <taxon>Gunneridae</taxon>
        <taxon>Pentapetalae</taxon>
        <taxon>rosids</taxon>
        <taxon>fabids</taxon>
        <taxon>Fabales</taxon>
        <taxon>Fabaceae</taxon>
        <taxon>Papilionoideae</taxon>
        <taxon>50 kb inversion clade</taxon>
        <taxon>NPAAA clade</taxon>
        <taxon>Hologalegina</taxon>
        <taxon>IRL clade</taxon>
        <taxon>Trifolieae</taxon>
        <taxon>Medicago</taxon>
    </lineage>
</organism>
<comment type="function">
    <text>Essential for the control of the cell cycle at the G2/M (mitosis) transition.</text>
</comment>
<comment type="subunit">
    <text>Interacts with the CDC2 protein kinase to form a serine/threonine kinase holoenzyme complex also known as maturation promoting factor (MPF). The cyclin subunit imparts substrate specificity to the complex.</text>
</comment>
<comment type="tissue specificity">
    <text>Only expressed in organs with dividing cells.</text>
</comment>
<comment type="developmental stage">
    <text>Accumulates steadily during G2 and is abruptly destroyed at mitosis.</text>
</comment>
<comment type="similarity">
    <text evidence="2">Belongs to the cyclin family. Cyclin AB subfamily.</text>
</comment>
<proteinExistence type="evidence at transcript level"/>
<evidence type="ECO:0000256" key="1">
    <source>
        <dbReference type="SAM" id="MobiDB-lite"/>
    </source>
</evidence>
<evidence type="ECO:0000305" key="2"/>
<name>CCNB1_MEDSA</name>
<dbReference type="EMBL" id="X68740">
    <property type="protein sequence ID" value="CAA48674.1"/>
    <property type="molecule type" value="mRNA"/>
</dbReference>
<dbReference type="PIR" id="PQ0489">
    <property type="entry name" value="S29924"/>
</dbReference>
<dbReference type="GO" id="GO:0051301">
    <property type="term" value="P:cell division"/>
    <property type="evidence" value="ECO:0007669"/>
    <property type="project" value="UniProtKB-KW"/>
</dbReference>
<dbReference type="Gene3D" id="1.10.472.10">
    <property type="entry name" value="Cyclin-like"/>
    <property type="match status" value="2"/>
</dbReference>
<dbReference type="InterPro" id="IPR036915">
    <property type="entry name" value="Cyclin-like_sf"/>
</dbReference>
<dbReference type="InterPro" id="IPR006671">
    <property type="entry name" value="Cyclin_N"/>
</dbReference>
<dbReference type="Pfam" id="PF00134">
    <property type="entry name" value="Cyclin_N"/>
    <property type="match status" value="1"/>
</dbReference>
<dbReference type="SUPFAM" id="SSF47954">
    <property type="entry name" value="Cyclin-like"/>
    <property type="match status" value="1"/>
</dbReference>
<keyword id="KW-0131">Cell cycle</keyword>
<keyword id="KW-0132">Cell division</keyword>
<keyword id="KW-0195">Cyclin</keyword>
<keyword id="KW-0498">Mitosis</keyword>
<protein>
    <recommendedName>
        <fullName>G2/mitotic-specific cyclin-1</fullName>
    </recommendedName>
    <alternativeName>
        <fullName>B-like cyclin</fullName>
    </alternativeName>
    <alternativeName>
        <fullName>CycMs1</fullName>
    </alternativeName>
</protein>